<comment type="function">
    <text evidence="1">Involved in the final reduction of the elongation cycle of fatty acid synthesis (FAS II). Catalyzes the reduction of a carbon-carbon double bond in an enoyl moiety that is covalently linked to an acyl carrier protein (ACP).</text>
</comment>
<comment type="catalytic activity">
    <reaction evidence="1">
        <text>a 2,3-saturated acyl-[ACP] + NAD(+) = a (2E)-enoyl-[ACP] + NADH + H(+)</text>
        <dbReference type="Rhea" id="RHEA:10240"/>
        <dbReference type="Rhea" id="RHEA-COMP:9925"/>
        <dbReference type="Rhea" id="RHEA-COMP:9926"/>
        <dbReference type="ChEBI" id="CHEBI:15378"/>
        <dbReference type="ChEBI" id="CHEBI:57540"/>
        <dbReference type="ChEBI" id="CHEBI:57945"/>
        <dbReference type="ChEBI" id="CHEBI:78784"/>
        <dbReference type="ChEBI" id="CHEBI:78785"/>
        <dbReference type="EC" id="1.3.1.9"/>
    </reaction>
</comment>
<comment type="pathway">
    <text evidence="1">Lipid metabolism; fatty acid biosynthesis.</text>
</comment>
<comment type="subunit">
    <text evidence="1">Monomer.</text>
</comment>
<comment type="similarity">
    <text evidence="1">Belongs to the TER reductase family.</text>
</comment>
<feature type="chain" id="PRO_1000188368" description="Enoyl-[acyl-carrier-protein] reductase [NADH]">
    <location>
        <begin position="1"/>
        <end position="400"/>
    </location>
</feature>
<feature type="active site" description="Proton donor" evidence="1">
    <location>
        <position position="235"/>
    </location>
</feature>
<feature type="binding site" evidence="1">
    <location>
        <begin position="48"/>
        <end position="53"/>
    </location>
    <ligand>
        <name>NAD(+)</name>
        <dbReference type="ChEBI" id="CHEBI:57540"/>
    </ligand>
</feature>
<feature type="binding site" evidence="1">
    <location>
        <begin position="74"/>
        <end position="75"/>
    </location>
    <ligand>
        <name>NAD(+)</name>
        <dbReference type="ChEBI" id="CHEBI:57540"/>
    </ligand>
</feature>
<feature type="binding site" evidence="1">
    <location>
        <begin position="111"/>
        <end position="112"/>
    </location>
    <ligand>
        <name>NAD(+)</name>
        <dbReference type="ChEBI" id="CHEBI:57540"/>
    </ligand>
</feature>
<feature type="binding site" evidence="1">
    <location>
        <begin position="139"/>
        <end position="140"/>
    </location>
    <ligand>
        <name>NAD(+)</name>
        <dbReference type="ChEBI" id="CHEBI:57540"/>
    </ligand>
</feature>
<feature type="binding site" evidence="1">
    <location>
        <position position="225"/>
    </location>
    <ligand>
        <name>substrate</name>
    </ligand>
</feature>
<feature type="binding site" evidence="1">
    <location>
        <position position="244"/>
    </location>
    <ligand>
        <name>NAD(+)</name>
        <dbReference type="ChEBI" id="CHEBI:57540"/>
    </ligand>
</feature>
<feature type="binding site" evidence="1">
    <location>
        <begin position="273"/>
        <end position="275"/>
    </location>
    <ligand>
        <name>NAD(+)</name>
        <dbReference type="ChEBI" id="CHEBI:57540"/>
    </ligand>
</feature>
<feature type="site" description="Plays an important role in discriminating NADH against NADPH" evidence="1">
    <location>
        <position position="75"/>
    </location>
</feature>
<dbReference type="EC" id="1.3.1.9" evidence="1"/>
<dbReference type="EMBL" id="CP001252">
    <property type="protein sequence ID" value="ACK47232.1"/>
    <property type="molecule type" value="Genomic_DNA"/>
</dbReference>
<dbReference type="RefSeq" id="WP_011846466.1">
    <property type="nucleotide sequence ID" value="NC_011663.1"/>
</dbReference>
<dbReference type="SMR" id="B8E5E3"/>
<dbReference type="KEGG" id="sbp:Sbal223_2744"/>
<dbReference type="HOGENOM" id="CLU_057698_1_0_6"/>
<dbReference type="UniPathway" id="UPA00094"/>
<dbReference type="Proteomes" id="UP000002507">
    <property type="component" value="Chromosome"/>
</dbReference>
<dbReference type="GO" id="GO:0004318">
    <property type="term" value="F:enoyl-[acyl-carrier-protein] reductase (NADH) activity"/>
    <property type="evidence" value="ECO:0007669"/>
    <property type="project" value="UniProtKB-UniRule"/>
</dbReference>
<dbReference type="GO" id="GO:0051287">
    <property type="term" value="F:NAD binding"/>
    <property type="evidence" value="ECO:0007669"/>
    <property type="project" value="UniProtKB-UniRule"/>
</dbReference>
<dbReference type="GO" id="GO:0050343">
    <property type="term" value="F:trans-2-enoyl-CoA reductase (NADH) activity"/>
    <property type="evidence" value="ECO:0007669"/>
    <property type="project" value="TreeGrafter"/>
</dbReference>
<dbReference type="GO" id="GO:0006633">
    <property type="term" value="P:fatty acid biosynthetic process"/>
    <property type="evidence" value="ECO:0007669"/>
    <property type="project" value="UniProtKB-UniRule"/>
</dbReference>
<dbReference type="FunFam" id="3.40.50.720:FF:000221">
    <property type="entry name" value="Enoyl-[acyl-carrier-protein] reductase [NADH]"/>
    <property type="match status" value="1"/>
</dbReference>
<dbReference type="Gene3D" id="3.40.50.720">
    <property type="entry name" value="NAD(P)-binding Rossmann-like Domain"/>
    <property type="match status" value="1"/>
</dbReference>
<dbReference type="HAMAP" id="MF_01838">
    <property type="entry name" value="FabV_reductase"/>
    <property type="match status" value="1"/>
</dbReference>
<dbReference type="InterPro" id="IPR024906">
    <property type="entry name" value="Eno_Rdtase_FAD-bd_dom"/>
</dbReference>
<dbReference type="InterPro" id="IPR024910">
    <property type="entry name" value="Enoyl-CoA_Rdtase_cat_dom"/>
</dbReference>
<dbReference type="InterPro" id="IPR050048">
    <property type="entry name" value="FabV-like_NADH_b"/>
</dbReference>
<dbReference type="InterPro" id="IPR010758">
    <property type="entry name" value="Trans-2-enoyl-CoA_reductase"/>
</dbReference>
<dbReference type="NCBIfam" id="NF043048">
    <property type="entry name" value="EnoyACPredFabV"/>
    <property type="match status" value="1"/>
</dbReference>
<dbReference type="NCBIfam" id="NF010177">
    <property type="entry name" value="PRK13656.1"/>
    <property type="match status" value="1"/>
</dbReference>
<dbReference type="PANTHER" id="PTHR37480">
    <property type="entry name" value="ENOYL-[ACYL-CARRIER-PROTEIN] REDUCTASE [NADH]"/>
    <property type="match status" value="1"/>
</dbReference>
<dbReference type="PANTHER" id="PTHR37480:SF1">
    <property type="entry name" value="ENOYL-[ACYL-CARRIER-PROTEIN] REDUCTASE [NADH]"/>
    <property type="match status" value="1"/>
</dbReference>
<dbReference type="Pfam" id="PF07055">
    <property type="entry name" value="Eno-Rase_FAD_bd"/>
    <property type="match status" value="1"/>
</dbReference>
<dbReference type="Pfam" id="PF12242">
    <property type="entry name" value="Eno-Rase_NADH_b"/>
    <property type="match status" value="1"/>
</dbReference>
<dbReference type="Pfam" id="PF12241">
    <property type="entry name" value="Enoyl_reductase"/>
    <property type="match status" value="1"/>
</dbReference>
<proteinExistence type="inferred from homology"/>
<accession>B8E5E3</accession>
<keyword id="KW-0275">Fatty acid biosynthesis</keyword>
<keyword id="KW-0276">Fatty acid metabolism</keyword>
<keyword id="KW-0444">Lipid biosynthesis</keyword>
<keyword id="KW-0443">Lipid metabolism</keyword>
<keyword id="KW-0520">NAD</keyword>
<keyword id="KW-0560">Oxidoreductase</keyword>
<protein>
    <recommendedName>
        <fullName evidence="1">Enoyl-[acyl-carrier-protein] reductase [NADH]</fullName>
        <shortName evidence="1">ENR</shortName>
        <ecNumber evidence="1">1.3.1.9</ecNumber>
    </recommendedName>
</protein>
<name>FABV_SHEB2</name>
<evidence type="ECO:0000255" key="1">
    <source>
        <dbReference type="HAMAP-Rule" id="MF_01838"/>
    </source>
</evidence>
<gene>
    <name evidence="1" type="primary">fabV</name>
    <name type="ordered locus">Sbal223_2744</name>
</gene>
<reference key="1">
    <citation type="submission" date="2008-12" db="EMBL/GenBank/DDBJ databases">
        <title>Complete sequence of chromosome of Shewanella baltica OS223.</title>
        <authorList>
            <consortium name="US DOE Joint Genome Institute"/>
            <person name="Lucas S."/>
            <person name="Copeland A."/>
            <person name="Lapidus A."/>
            <person name="Glavina del Rio T."/>
            <person name="Dalin E."/>
            <person name="Tice H."/>
            <person name="Bruce D."/>
            <person name="Goodwin L."/>
            <person name="Pitluck S."/>
            <person name="Chertkov O."/>
            <person name="Meincke L."/>
            <person name="Brettin T."/>
            <person name="Detter J.C."/>
            <person name="Han C."/>
            <person name="Kuske C.R."/>
            <person name="Larimer F."/>
            <person name="Land M."/>
            <person name="Hauser L."/>
            <person name="Kyrpides N."/>
            <person name="Ovchinnikova G."/>
            <person name="Brettar I."/>
            <person name="Rodrigues J."/>
            <person name="Konstantinidis K."/>
            <person name="Tiedje J."/>
        </authorList>
    </citation>
    <scope>NUCLEOTIDE SEQUENCE [LARGE SCALE GENOMIC DNA]</scope>
    <source>
        <strain>OS223</strain>
    </source>
</reference>
<organism>
    <name type="scientific">Shewanella baltica (strain OS223)</name>
    <dbReference type="NCBI Taxonomy" id="407976"/>
    <lineage>
        <taxon>Bacteria</taxon>
        <taxon>Pseudomonadati</taxon>
        <taxon>Pseudomonadota</taxon>
        <taxon>Gammaproteobacteria</taxon>
        <taxon>Alteromonadales</taxon>
        <taxon>Shewanellaceae</taxon>
        <taxon>Shewanella</taxon>
    </lineage>
</organism>
<sequence>MIIKPKIRGFICTTTHPVGCEANVQEQITLTKAKGKIANGPKKVLVVGSSSGYGLSSRIAAAFGSDAATIGVFFEKPGTETKPGTAGWYNSAAFDKFAKAEGLYSKSINCDAFSHEAKQKVIELIKQDLGEIDMVVYSLASPVRKLPDSGELIRSALKPIGETYTATAVDTNKDCIIEATVEPATEQEIADTVTVMGGEDWELWIKALSEAGVLADNCKTVAYSYIGTELTWPIYWHGALGKAKMDLDRAAKALNEQLSATGGSANVAVLKSVVTQASSAIPVMPLYIAMVFKKMRQEGLHEGCMEQIYRMFSERLFRADGAKPETDSDNRIRLDDWELREDIQQHCRNLWPQVTTENLSELTDYREYKAEFIKLFGFGIEGIDYDADVNPYVEFDVIEL</sequence>